<gene>
    <name evidence="1" type="primary">recA</name>
    <name type="ordered locus">BR1202</name>
    <name type="ordered locus">BS1330_I1198</name>
</gene>
<protein>
    <recommendedName>
        <fullName evidence="1">Protein RecA</fullName>
    </recommendedName>
    <alternativeName>
        <fullName evidence="1">Recombinase A</fullName>
    </alternativeName>
</protein>
<keyword id="KW-0067">ATP-binding</keyword>
<keyword id="KW-0963">Cytoplasm</keyword>
<keyword id="KW-0227">DNA damage</keyword>
<keyword id="KW-0233">DNA recombination</keyword>
<keyword id="KW-0234">DNA repair</keyword>
<keyword id="KW-0238">DNA-binding</keyword>
<keyword id="KW-0547">Nucleotide-binding</keyword>
<keyword id="KW-0742">SOS response</keyword>
<evidence type="ECO:0000255" key="1">
    <source>
        <dbReference type="HAMAP-Rule" id="MF_00268"/>
    </source>
</evidence>
<organism>
    <name type="scientific">Brucella suis biovar 1 (strain 1330)</name>
    <dbReference type="NCBI Taxonomy" id="204722"/>
    <lineage>
        <taxon>Bacteria</taxon>
        <taxon>Pseudomonadati</taxon>
        <taxon>Pseudomonadota</taxon>
        <taxon>Alphaproteobacteria</taxon>
        <taxon>Hyphomicrobiales</taxon>
        <taxon>Brucellaceae</taxon>
        <taxon>Brucella/Ochrobactrum group</taxon>
        <taxon>Brucella</taxon>
    </lineage>
</organism>
<name>RECA_BRUSU</name>
<dbReference type="EMBL" id="AE014291">
    <property type="protein sequence ID" value="AAN30121.1"/>
    <property type="molecule type" value="Genomic_DNA"/>
</dbReference>
<dbReference type="EMBL" id="CP002997">
    <property type="protein sequence ID" value="AEM18539.1"/>
    <property type="molecule type" value="Genomic_DNA"/>
</dbReference>
<dbReference type="RefSeq" id="WP_002964332.1">
    <property type="nucleotide sequence ID" value="NZ_KN046804.1"/>
</dbReference>
<dbReference type="SMR" id="P65976"/>
<dbReference type="GeneID" id="97533554"/>
<dbReference type="KEGG" id="bms:BR1202"/>
<dbReference type="KEGG" id="bsi:BS1330_I1198"/>
<dbReference type="PATRIC" id="fig|204722.21.peg.2276"/>
<dbReference type="HOGENOM" id="CLU_040469_3_2_5"/>
<dbReference type="PRO" id="PR:P65976"/>
<dbReference type="Proteomes" id="UP000007104">
    <property type="component" value="Chromosome I"/>
</dbReference>
<dbReference type="GO" id="GO:0005829">
    <property type="term" value="C:cytosol"/>
    <property type="evidence" value="ECO:0007669"/>
    <property type="project" value="TreeGrafter"/>
</dbReference>
<dbReference type="GO" id="GO:0005524">
    <property type="term" value="F:ATP binding"/>
    <property type="evidence" value="ECO:0007669"/>
    <property type="project" value="UniProtKB-UniRule"/>
</dbReference>
<dbReference type="GO" id="GO:0016887">
    <property type="term" value="F:ATP hydrolysis activity"/>
    <property type="evidence" value="ECO:0007669"/>
    <property type="project" value="InterPro"/>
</dbReference>
<dbReference type="GO" id="GO:0140664">
    <property type="term" value="F:ATP-dependent DNA damage sensor activity"/>
    <property type="evidence" value="ECO:0007669"/>
    <property type="project" value="InterPro"/>
</dbReference>
<dbReference type="GO" id="GO:0003684">
    <property type="term" value="F:damaged DNA binding"/>
    <property type="evidence" value="ECO:0007669"/>
    <property type="project" value="UniProtKB-UniRule"/>
</dbReference>
<dbReference type="GO" id="GO:0003697">
    <property type="term" value="F:single-stranded DNA binding"/>
    <property type="evidence" value="ECO:0007669"/>
    <property type="project" value="UniProtKB-UniRule"/>
</dbReference>
<dbReference type="GO" id="GO:0006310">
    <property type="term" value="P:DNA recombination"/>
    <property type="evidence" value="ECO:0007669"/>
    <property type="project" value="UniProtKB-UniRule"/>
</dbReference>
<dbReference type="GO" id="GO:0006281">
    <property type="term" value="P:DNA repair"/>
    <property type="evidence" value="ECO:0007669"/>
    <property type="project" value="UniProtKB-UniRule"/>
</dbReference>
<dbReference type="GO" id="GO:0009432">
    <property type="term" value="P:SOS response"/>
    <property type="evidence" value="ECO:0007669"/>
    <property type="project" value="UniProtKB-UniRule"/>
</dbReference>
<dbReference type="CDD" id="cd00983">
    <property type="entry name" value="RecA"/>
    <property type="match status" value="1"/>
</dbReference>
<dbReference type="FunFam" id="3.40.50.300:FF:000087">
    <property type="entry name" value="Recombinase RecA"/>
    <property type="match status" value="1"/>
</dbReference>
<dbReference type="Gene3D" id="3.40.50.300">
    <property type="entry name" value="P-loop containing nucleotide triphosphate hydrolases"/>
    <property type="match status" value="1"/>
</dbReference>
<dbReference type="HAMAP" id="MF_00268">
    <property type="entry name" value="RecA"/>
    <property type="match status" value="1"/>
</dbReference>
<dbReference type="InterPro" id="IPR003593">
    <property type="entry name" value="AAA+_ATPase"/>
</dbReference>
<dbReference type="InterPro" id="IPR013765">
    <property type="entry name" value="DNA_recomb/repair_RecA"/>
</dbReference>
<dbReference type="InterPro" id="IPR020584">
    <property type="entry name" value="DNA_recomb/repair_RecA_CS"/>
</dbReference>
<dbReference type="InterPro" id="IPR027417">
    <property type="entry name" value="P-loop_NTPase"/>
</dbReference>
<dbReference type="InterPro" id="IPR049261">
    <property type="entry name" value="RecA-like_C"/>
</dbReference>
<dbReference type="InterPro" id="IPR049428">
    <property type="entry name" value="RecA-like_N"/>
</dbReference>
<dbReference type="InterPro" id="IPR020588">
    <property type="entry name" value="RecA_ATP-bd"/>
</dbReference>
<dbReference type="InterPro" id="IPR023400">
    <property type="entry name" value="RecA_C_sf"/>
</dbReference>
<dbReference type="InterPro" id="IPR020587">
    <property type="entry name" value="RecA_monomer-monomer_interface"/>
</dbReference>
<dbReference type="NCBIfam" id="TIGR02012">
    <property type="entry name" value="tigrfam_recA"/>
    <property type="match status" value="1"/>
</dbReference>
<dbReference type="PANTHER" id="PTHR45900:SF1">
    <property type="entry name" value="MITOCHONDRIAL DNA REPAIR PROTEIN RECA HOMOLOG-RELATED"/>
    <property type="match status" value="1"/>
</dbReference>
<dbReference type="PANTHER" id="PTHR45900">
    <property type="entry name" value="RECA"/>
    <property type="match status" value="1"/>
</dbReference>
<dbReference type="Pfam" id="PF00154">
    <property type="entry name" value="RecA"/>
    <property type="match status" value="1"/>
</dbReference>
<dbReference type="Pfam" id="PF21096">
    <property type="entry name" value="RecA_C"/>
    <property type="match status" value="1"/>
</dbReference>
<dbReference type="PRINTS" id="PR00142">
    <property type="entry name" value="RECA"/>
</dbReference>
<dbReference type="SMART" id="SM00382">
    <property type="entry name" value="AAA"/>
    <property type="match status" value="1"/>
</dbReference>
<dbReference type="SUPFAM" id="SSF52540">
    <property type="entry name" value="P-loop containing nucleoside triphosphate hydrolases"/>
    <property type="match status" value="1"/>
</dbReference>
<dbReference type="SUPFAM" id="SSF54752">
    <property type="entry name" value="RecA protein, C-terminal domain"/>
    <property type="match status" value="1"/>
</dbReference>
<dbReference type="PROSITE" id="PS00321">
    <property type="entry name" value="RECA_1"/>
    <property type="match status" value="1"/>
</dbReference>
<dbReference type="PROSITE" id="PS50162">
    <property type="entry name" value="RECA_2"/>
    <property type="match status" value="1"/>
</dbReference>
<dbReference type="PROSITE" id="PS50163">
    <property type="entry name" value="RECA_3"/>
    <property type="match status" value="1"/>
</dbReference>
<sequence>MSQNSLRLVEDNSVDKTKALDAALSQIERAFGKGSIMRLGQNDQVVEIETVSTGSLSLDIALGVGGLPKGRIVEIYGPESSGKTTLALHTIAEAQKKGGICAFVDAEHALDPVYARKLGVDLENLLISQPDTGEQALEITDTLVRSGAIDVLVVDSVAALTPRAEIEGEMGDSLPGLQARLMSQALRKLTGSISRSNCMVIFINQIRMKIGVMFGSPETTTGGNALKFYASVRLDIRRIGSIKERDEVVGNQTRVKVVKNKLAPPFKQVEFDIMYGAGVSKVGELVDLGVKAGVVEKSGAWFSYNSQRLGQGRENAKQYLKDNPEVAREIETTLRQNAGLIAEQFLDDGGPEEDAAGAAEM</sequence>
<comment type="function">
    <text evidence="1">Can catalyze the hydrolysis of ATP in the presence of single-stranded DNA, the ATP-dependent uptake of single-stranded DNA by duplex DNA, and the ATP-dependent hybridization of homologous single-stranded DNAs. It interacts with LexA causing its activation and leading to its autocatalytic cleavage.</text>
</comment>
<comment type="subcellular location">
    <subcellularLocation>
        <location evidence="1">Cytoplasm</location>
    </subcellularLocation>
</comment>
<comment type="similarity">
    <text evidence="1">Belongs to the RecA family.</text>
</comment>
<proteinExistence type="inferred from homology"/>
<reference key="1">
    <citation type="journal article" date="2002" name="Proc. Natl. Acad. Sci. U.S.A.">
        <title>The Brucella suis genome reveals fundamental similarities between animal and plant pathogens and symbionts.</title>
        <authorList>
            <person name="Paulsen I.T."/>
            <person name="Seshadri R."/>
            <person name="Nelson K.E."/>
            <person name="Eisen J.A."/>
            <person name="Heidelberg J.F."/>
            <person name="Read T.D."/>
            <person name="Dodson R.J."/>
            <person name="Umayam L.A."/>
            <person name="Brinkac L.M."/>
            <person name="Beanan M.J."/>
            <person name="Daugherty S.C."/>
            <person name="DeBoy R.T."/>
            <person name="Durkin A.S."/>
            <person name="Kolonay J.F."/>
            <person name="Madupu R."/>
            <person name="Nelson W.C."/>
            <person name="Ayodeji B."/>
            <person name="Kraul M."/>
            <person name="Shetty J."/>
            <person name="Malek J.A."/>
            <person name="Van Aken S.E."/>
            <person name="Riedmuller S."/>
            <person name="Tettelin H."/>
            <person name="Gill S.R."/>
            <person name="White O."/>
            <person name="Salzberg S.L."/>
            <person name="Hoover D.L."/>
            <person name="Lindler L.E."/>
            <person name="Halling S.M."/>
            <person name="Boyle S.M."/>
            <person name="Fraser C.M."/>
        </authorList>
    </citation>
    <scope>NUCLEOTIDE SEQUENCE [LARGE SCALE GENOMIC DNA]</scope>
    <source>
        <strain>1330</strain>
    </source>
</reference>
<reference key="2">
    <citation type="journal article" date="2011" name="J. Bacteriol.">
        <title>Revised genome sequence of Brucella suis 1330.</title>
        <authorList>
            <person name="Tae H."/>
            <person name="Shallom S."/>
            <person name="Settlage R."/>
            <person name="Preston D."/>
            <person name="Adams L.G."/>
            <person name="Garner H.R."/>
        </authorList>
    </citation>
    <scope>NUCLEOTIDE SEQUENCE [LARGE SCALE GENOMIC DNA]</scope>
    <source>
        <strain>1330</strain>
    </source>
</reference>
<accession>P65976</accession>
<accession>G0KAC3</accession>
<accession>Q8YHL0</accession>
<feature type="chain" id="PRO_0000122672" description="Protein RecA">
    <location>
        <begin position="1"/>
        <end position="361"/>
    </location>
</feature>
<feature type="binding site" evidence="1">
    <location>
        <begin position="77"/>
        <end position="84"/>
    </location>
    <ligand>
        <name>ATP</name>
        <dbReference type="ChEBI" id="CHEBI:30616"/>
    </ligand>
</feature>